<comment type="function">
    <text>Involved in the synthesis of (1-&gt;6)- and (1-&gt;3)-beta-D-glucan polymers of the yeast cell wall in vivo. It is required for full activity of beta-glucan synthase in vitro. It may be a beta-glucan synthase, part of a multiprotein glucan synthase or a modulator.</text>
</comment>
<comment type="subcellular location">
    <subcellularLocation>
        <location>Golgi apparatus membrane</location>
        <topology>Single-pass type II membrane protein</topology>
    </subcellularLocation>
</comment>
<comment type="similarity">
    <text evidence="4">Belongs to the SKN1/KRE6 family.</text>
</comment>
<keyword id="KW-0961">Cell wall biogenesis/degradation</keyword>
<keyword id="KW-0325">Glycoprotein</keyword>
<keyword id="KW-0333">Golgi apparatus</keyword>
<keyword id="KW-0472">Membrane</keyword>
<keyword id="KW-0735">Signal-anchor</keyword>
<keyword id="KW-0812">Transmembrane</keyword>
<keyword id="KW-1133">Transmembrane helix</keyword>
<proteinExistence type="evidence at transcript level"/>
<accession>P87023</accession>
<sequence length="740" mass="82457">MASQRDLTSNNPHFHISSSRNNTNDDFNSDHNPRNPFGDEPEEEEELDSASFSSSSQNNQPHHPFATSNQTSSTNNLHSTNSIRNEAEYGKPFQAYSGYYSNGGSSSYLNQEGVISDESRLLSSGNNNNNNNNNRDVSSVGGGGGSGDNRLNPTSPAEFDRYPSMAGSRVVSSTSLVSFNNPSNMMRNHHQHQPHLGSSSSPTSSSMNNDSISDKSTSPFPNDFSPFGGYPASSFPLSIDEKEPDDYLNNPDPVQDAEYEKNRFMHDLKNMDKRSLGGLIGFIILFIAALAVFIILPALTYSGATNPYHPESYEVLTKYSYPMLSAIRMNLVDPDTPESAYKKKAKDGSEWVLVFSDEFDAEGRTFYEGDDQFFTAPDIHYDATKDLEWYDPDAVTTANGTLNLRMDAYKNHNLFYRSGMVQSWNQLCYTQGHLEISARLPNYGNVTGLWPGLWSMGNLGRPGYLGSTDGVWPYSYDSCDAGITPNQSSPDGISYLPGQRLNKCTCPGELHPNRGVGRGAPEIDVIEGEVMTDSSGKKENCGVASQSLQLAPMDIWYIPDYNWVEIYNFSVSTMNTYTGGPFQQALSATTMLNVTWYEFGDNAHNFQTYGYEYLNDPETGYLRWFVGDDPTLTVYSQALHPDGNIGWRPLSKEPMSLILNLGISNNWAYIDWPSISFPVTFRIDYVRVYQPPDQINVGCDPTDFPTYDYIQQHLNLYENANITSFEDGGYKFPKNSLIGC</sequence>
<name>KRE6_CANAX</name>
<evidence type="ECO:0000255" key="1"/>
<evidence type="ECO:0000255" key="2">
    <source>
        <dbReference type="PROSITE-ProRule" id="PRU01098"/>
    </source>
</evidence>
<evidence type="ECO:0000256" key="3">
    <source>
        <dbReference type="SAM" id="MobiDB-lite"/>
    </source>
</evidence>
<evidence type="ECO:0000305" key="4"/>
<protein>
    <recommendedName>
        <fullName>Beta-glucan synthesis-associated protein KRE6</fullName>
    </recommendedName>
</protein>
<feature type="chain" id="PRO_0000084330" description="Beta-glucan synthesis-associated protein KRE6">
    <location>
        <begin position="1"/>
        <end position="740"/>
    </location>
</feature>
<feature type="topological domain" description="Cytoplasmic" evidence="1">
    <location>
        <begin position="1"/>
        <end position="275"/>
    </location>
</feature>
<feature type="transmembrane region" description="Helical; Signal-anchor for type II membrane protein" evidence="1">
    <location>
        <begin position="276"/>
        <end position="296"/>
    </location>
</feature>
<feature type="topological domain" description="Lumenal" evidence="1">
    <location>
        <begin position="297"/>
        <end position="740"/>
    </location>
</feature>
<feature type="domain" description="GH16" evidence="2">
    <location>
        <begin position="299"/>
        <end position="694"/>
    </location>
</feature>
<feature type="region of interest" description="Disordered" evidence="3">
    <location>
        <begin position="1"/>
        <end position="79"/>
    </location>
</feature>
<feature type="region of interest" description="Disordered" evidence="3">
    <location>
        <begin position="120"/>
        <end position="162"/>
    </location>
</feature>
<feature type="region of interest" description="Disordered" evidence="3">
    <location>
        <begin position="177"/>
        <end position="220"/>
    </location>
</feature>
<feature type="compositionally biased region" description="Polar residues" evidence="3">
    <location>
        <begin position="1"/>
        <end position="26"/>
    </location>
</feature>
<feature type="compositionally biased region" description="Acidic residues" evidence="3">
    <location>
        <begin position="39"/>
        <end position="48"/>
    </location>
</feature>
<feature type="compositionally biased region" description="Low complexity" evidence="3">
    <location>
        <begin position="67"/>
        <end position="79"/>
    </location>
</feature>
<feature type="compositionally biased region" description="Low complexity" evidence="3">
    <location>
        <begin position="121"/>
        <end position="139"/>
    </location>
</feature>
<feature type="compositionally biased region" description="Polar residues" evidence="3">
    <location>
        <begin position="177"/>
        <end position="186"/>
    </location>
</feature>
<feature type="compositionally biased region" description="Low complexity" evidence="3">
    <location>
        <begin position="198"/>
        <end position="216"/>
    </location>
</feature>
<feature type="glycosylation site" description="N-linked (GlcNAc...) asparagine" evidence="1">
    <location>
        <position position="399"/>
    </location>
</feature>
<feature type="glycosylation site" description="N-linked (GlcNAc...) asparagine" evidence="1">
    <location>
        <position position="445"/>
    </location>
</feature>
<feature type="glycosylation site" description="N-linked (GlcNAc...) asparagine" evidence="1">
    <location>
        <position position="486"/>
    </location>
</feature>
<feature type="glycosylation site" description="N-linked (GlcNAc...) asparagine" evidence="1">
    <location>
        <position position="568"/>
    </location>
</feature>
<feature type="glycosylation site" description="N-linked (GlcNAc...) asparagine" evidence="1">
    <location>
        <position position="593"/>
    </location>
</feature>
<feature type="glycosylation site" description="N-linked (GlcNAc...) asparagine" evidence="1">
    <location>
        <position position="721"/>
    </location>
</feature>
<organism>
    <name type="scientific">Candida albicans</name>
    <name type="common">Yeast</name>
    <dbReference type="NCBI Taxonomy" id="5476"/>
    <lineage>
        <taxon>Eukaryota</taxon>
        <taxon>Fungi</taxon>
        <taxon>Dikarya</taxon>
        <taxon>Ascomycota</taxon>
        <taxon>Saccharomycotina</taxon>
        <taxon>Pichiomycetes</taxon>
        <taxon>Debaryomycetaceae</taxon>
        <taxon>Candida/Lodderomyces clade</taxon>
        <taxon>Candida</taxon>
    </lineage>
</organism>
<gene>
    <name type="primary">KRE6</name>
</gene>
<dbReference type="EMBL" id="D88490">
    <property type="protein sequence ID" value="BAA19593.1"/>
    <property type="molecule type" value="mRNA"/>
</dbReference>
<dbReference type="SMR" id="P87023"/>
<dbReference type="CAZy" id="GH16">
    <property type="family name" value="Glycoside Hydrolase Family 16"/>
</dbReference>
<dbReference type="GlyCosmos" id="P87023">
    <property type="glycosylation" value="6 sites, No reported glycans"/>
</dbReference>
<dbReference type="VEuPathDB" id="FungiDB:C3_05830W_A"/>
<dbReference type="VEuPathDB" id="FungiDB:CAWG_02892"/>
<dbReference type="PHI-base" id="PHI:8716"/>
<dbReference type="GO" id="GO:0005789">
    <property type="term" value="C:endoplasmic reticulum membrane"/>
    <property type="evidence" value="ECO:0007669"/>
    <property type="project" value="TreeGrafter"/>
</dbReference>
<dbReference type="GO" id="GO:0000139">
    <property type="term" value="C:Golgi membrane"/>
    <property type="evidence" value="ECO:0007669"/>
    <property type="project" value="UniProtKB-SubCell"/>
</dbReference>
<dbReference type="GO" id="GO:0005886">
    <property type="term" value="C:plasma membrane"/>
    <property type="evidence" value="ECO:0007669"/>
    <property type="project" value="TreeGrafter"/>
</dbReference>
<dbReference type="GO" id="GO:0015926">
    <property type="term" value="F:glucosidase activity"/>
    <property type="evidence" value="ECO:0007669"/>
    <property type="project" value="TreeGrafter"/>
</dbReference>
<dbReference type="GO" id="GO:0006078">
    <property type="term" value="P:(1-&gt;6)-beta-D-glucan biosynthetic process"/>
    <property type="evidence" value="ECO:0007669"/>
    <property type="project" value="TreeGrafter"/>
</dbReference>
<dbReference type="GO" id="GO:0031505">
    <property type="term" value="P:fungal-type cell wall organization"/>
    <property type="evidence" value="ECO:0007669"/>
    <property type="project" value="TreeGrafter"/>
</dbReference>
<dbReference type="CDD" id="cd02180">
    <property type="entry name" value="GH16_fungal_KRE6_glucanase"/>
    <property type="match status" value="1"/>
</dbReference>
<dbReference type="FunFam" id="2.60.120.200:FF:000140">
    <property type="entry name" value="Beta-glucan synthesis-associated protein"/>
    <property type="match status" value="1"/>
</dbReference>
<dbReference type="Gene3D" id="2.60.120.200">
    <property type="match status" value="1"/>
</dbReference>
<dbReference type="InterPro" id="IPR013320">
    <property type="entry name" value="ConA-like_dom_sf"/>
</dbReference>
<dbReference type="InterPro" id="IPR000757">
    <property type="entry name" value="GH16"/>
</dbReference>
<dbReference type="InterPro" id="IPR005629">
    <property type="entry name" value="Skn1/Kre6/Sbg1"/>
</dbReference>
<dbReference type="PANTHER" id="PTHR31361">
    <property type="entry name" value="BETA-GLUCAN SYNTHESIS-ASSOCIATED PROTEIN KRE6-RELATED"/>
    <property type="match status" value="1"/>
</dbReference>
<dbReference type="PANTHER" id="PTHR31361:SF1">
    <property type="entry name" value="BETA-GLUCAN SYNTHESIS-ASSOCIATED PROTEIN KRE6-RELATED"/>
    <property type="match status" value="1"/>
</dbReference>
<dbReference type="Pfam" id="PF03935">
    <property type="entry name" value="SKN1_KRE6_Sbg1"/>
    <property type="match status" value="1"/>
</dbReference>
<dbReference type="SUPFAM" id="SSF49899">
    <property type="entry name" value="Concanavalin A-like lectins/glucanases"/>
    <property type="match status" value="1"/>
</dbReference>
<dbReference type="PROSITE" id="PS51762">
    <property type="entry name" value="GH16_2"/>
    <property type="match status" value="1"/>
</dbReference>
<reference key="1">
    <citation type="journal article" date="1997" name="J. Bacteriol.">
        <title>Isolation of the Candida albicans homologs of Saccharomyces cerevisiae KRE6 and SKN1: expression and physiological function.</title>
        <authorList>
            <person name="Mio T."/>
            <person name="Yamada-Okabe T."/>
            <person name="Yabe T."/>
            <person name="Nakajima T."/>
            <person name="Arisawa M."/>
            <person name="Yamada-Okabe H."/>
        </authorList>
    </citation>
    <scope>NUCLEOTIDE SEQUENCE [MRNA]</scope>
</reference>